<protein>
    <recommendedName>
        <fullName>Probable dipeptidyl peptidase 4</fullName>
        <ecNumber>3.4.14.5</ecNumber>
    </recommendedName>
    <alternativeName>
        <fullName>Dipeptidyl peptidase IV</fullName>
        <shortName>DPP IV</shortName>
        <shortName>DppIV</shortName>
    </alternativeName>
</protein>
<sequence length="768" mass="86453">MKLGKWSVLLLVGCTAAIDIPRKPFPPTGSGHKRLTFNETVVKPVIAPSSTAVEWISTAEDGDYVFQDSDGSLKIQSIVTNHTQTLVPADKVPDDAYSYWIHPNLSSVLWATNYTKQYRYSYFASYYIQDLQSFKLAPLASNQAGDIQYANWSPTGDAIAFVRANNVYVWTAKSTTQITTDGSADLFNGVPDWIYEEEILGDRHALWFSPDAEYLAFLRFNETGVPTFRVPYYMDNEEVAPPYPRELELRYPKVSQTNPTVEVRLLSRATGEVSSVSIKAFNATDLVIGEVAWLTETHSQVAVKAFNRVQDQQKVVTVDVLSLKTKTISERDGTDGWLDNALSITYIGQIGDSKAEYYIDISDESGWAHLWLFPVAGGRPMALTKGEWEVTAILSIDKQRQLVYYLSTQHHSTERHVYSVSWKTFTATPLVDDTVAAVWSASFSSQGGYYILSYRGPDVPYQELYAINSTKPLCTITSNAAVYDVLKQYTLPKISYFELRLPSGETLNVMQRLPVSFSPRKKYPILFTPYGGPGAQEVSKAWQSQTFKSYIASDPELEFVTWTVDNRGTGYKGRRFRGQVAKQLGRLEAQDQVWAAQQAAKLPFIDAEHIAIWGWSYGGYLTGKVIETDSGVFSLGVLTAPVSDWRFYDSMYTERYMKTLQENANGYNASAIWDVAGYKNVRGGVLIQHGTGDDNVHFQNAAALVDRLVGEGVSPDKLQVQWFTDSDHGIRYHGGSVFLYRQLAKRLYEEKHRKKSEGHQWSKRSLEF</sequence>
<dbReference type="EC" id="3.4.14.5"/>
<dbReference type="EMBL" id="DS027054">
    <property type="protein sequence ID" value="EAW10396.1"/>
    <property type="molecule type" value="Genomic_DNA"/>
</dbReference>
<dbReference type="RefSeq" id="XP_001271822.1">
    <property type="nucleotide sequence ID" value="XM_001271821.1"/>
</dbReference>
<dbReference type="SMR" id="A1CHP1"/>
<dbReference type="STRING" id="344612.A1CHP1"/>
<dbReference type="ESTHER" id="aspcl-dpp4">
    <property type="family name" value="DPP4N_Peptidase_S9"/>
</dbReference>
<dbReference type="MEROPS" id="S09.008"/>
<dbReference type="GlyCosmos" id="A1CHP1">
    <property type="glycosylation" value="8 sites, No reported glycans"/>
</dbReference>
<dbReference type="EnsemblFungi" id="EAW10396">
    <property type="protein sequence ID" value="EAW10396"/>
    <property type="gene ID" value="ACLA_048680"/>
</dbReference>
<dbReference type="GeneID" id="4704099"/>
<dbReference type="KEGG" id="act:ACLA_048680"/>
<dbReference type="VEuPathDB" id="FungiDB:ACLA_048680"/>
<dbReference type="eggNOG" id="KOG2100">
    <property type="taxonomic scope" value="Eukaryota"/>
</dbReference>
<dbReference type="HOGENOM" id="CLU_006105_0_2_1"/>
<dbReference type="OMA" id="YTSTEHH"/>
<dbReference type="OrthoDB" id="16520at2759"/>
<dbReference type="Proteomes" id="UP000006701">
    <property type="component" value="Unassembled WGS sequence"/>
</dbReference>
<dbReference type="GO" id="GO:0005576">
    <property type="term" value="C:extracellular region"/>
    <property type="evidence" value="ECO:0007669"/>
    <property type="project" value="UniProtKB-SubCell"/>
</dbReference>
<dbReference type="GO" id="GO:0005886">
    <property type="term" value="C:plasma membrane"/>
    <property type="evidence" value="ECO:0007669"/>
    <property type="project" value="TreeGrafter"/>
</dbReference>
<dbReference type="GO" id="GO:0004177">
    <property type="term" value="F:aminopeptidase activity"/>
    <property type="evidence" value="ECO:0007669"/>
    <property type="project" value="UniProtKB-KW"/>
</dbReference>
<dbReference type="GO" id="GO:0008239">
    <property type="term" value="F:dipeptidyl-peptidase activity"/>
    <property type="evidence" value="ECO:0007669"/>
    <property type="project" value="UniProtKB-EC"/>
</dbReference>
<dbReference type="GO" id="GO:0008236">
    <property type="term" value="F:serine-type peptidase activity"/>
    <property type="evidence" value="ECO:0007669"/>
    <property type="project" value="UniProtKB-KW"/>
</dbReference>
<dbReference type="GO" id="GO:0006508">
    <property type="term" value="P:proteolysis"/>
    <property type="evidence" value="ECO:0007669"/>
    <property type="project" value="UniProtKB-KW"/>
</dbReference>
<dbReference type="FunFam" id="3.40.50.1820:FF:000003">
    <property type="entry name" value="Dipeptidyl peptidase 4"/>
    <property type="match status" value="1"/>
</dbReference>
<dbReference type="FunFam" id="2.140.10.30:FF:000003">
    <property type="entry name" value="Probable dipeptidyl peptidase 4"/>
    <property type="match status" value="1"/>
</dbReference>
<dbReference type="Gene3D" id="3.40.50.1820">
    <property type="entry name" value="alpha/beta hydrolase"/>
    <property type="match status" value="1"/>
</dbReference>
<dbReference type="Gene3D" id="2.140.10.30">
    <property type="entry name" value="Dipeptidylpeptidase IV, N-terminal domain"/>
    <property type="match status" value="1"/>
</dbReference>
<dbReference type="InterPro" id="IPR029058">
    <property type="entry name" value="AB_hydrolase_fold"/>
</dbReference>
<dbReference type="InterPro" id="IPR001375">
    <property type="entry name" value="Peptidase_S9_cat"/>
</dbReference>
<dbReference type="InterPro" id="IPR002469">
    <property type="entry name" value="Peptidase_S9B_N"/>
</dbReference>
<dbReference type="InterPro" id="IPR050278">
    <property type="entry name" value="Serine_Prot_S9B/DPPIV"/>
</dbReference>
<dbReference type="PANTHER" id="PTHR11731:SF162">
    <property type="entry name" value="DIPEPTIDYL PEPTIDASE 4-RELATED"/>
    <property type="match status" value="1"/>
</dbReference>
<dbReference type="PANTHER" id="PTHR11731">
    <property type="entry name" value="PROTEASE FAMILY S9B,C DIPEPTIDYL-PEPTIDASE IV-RELATED"/>
    <property type="match status" value="1"/>
</dbReference>
<dbReference type="Pfam" id="PF00930">
    <property type="entry name" value="DPPIV_N"/>
    <property type="match status" value="1"/>
</dbReference>
<dbReference type="Pfam" id="PF00326">
    <property type="entry name" value="Peptidase_S9"/>
    <property type="match status" value="1"/>
</dbReference>
<dbReference type="SUPFAM" id="SSF53474">
    <property type="entry name" value="alpha/beta-Hydrolases"/>
    <property type="match status" value="1"/>
</dbReference>
<dbReference type="SUPFAM" id="SSF82171">
    <property type="entry name" value="DPP6 N-terminal domain-like"/>
    <property type="match status" value="1"/>
</dbReference>
<organism>
    <name type="scientific">Aspergillus clavatus (strain ATCC 1007 / CBS 513.65 / DSM 816 / NCTC 3887 / NRRL 1 / QM 1276 / 107)</name>
    <dbReference type="NCBI Taxonomy" id="344612"/>
    <lineage>
        <taxon>Eukaryota</taxon>
        <taxon>Fungi</taxon>
        <taxon>Dikarya</taxon>
        <taxon>Ascomycota</taxon>
        <taxon>Pezizomycotina</taxon>
        <taxon>Eurotiomycetes</taxon>
        <taxon>Eurotiomycetidae</taxon>
        <taxon>Eurotiales</taxon>
        <taxon>Aspergillaceae</taxon>
        <taxon>Aspergillus</taxon>
        <taxon>Aspergillus subgen. Fumigati</taxon>
    </lineage>
</organism>
<comment type="function">
    <text evidence="1">Extracellular dipeptidyl-peptidase which removes N-terminal dipeptides sequentially from polypeptides having unsubstituted N-termini provided that the penultimate residue is proline.</text>
</comment>
<comment type="catalytic activity">
    <reaction>
        <text>Release of an N-terminal dipeptide, Xaa-Yaa-|-Zaa-, from a polypeptide, preferentially when Yaa is Pro, provided Zaa is neither Pro nor hydroxyproline.</text>
        <dbReference type="EC" id="3.4.14.5"/>
    </reaction>
</comment>
<comment type="subcellular location">
    <subcellularLocation>
        <location evidence="1">Secreted</location>
    </subcellularLocation>
</comment>
<comment type="similarity">
    <text evidence="3">Belongs to the peptidase S9B family.</text>
</comment>
<name>DPP4_ASPCL</name>
<gene>
    <name type="primary">dpp4</name>
    <name type="ORF">ACLA_048680</name>
</gene>
<accession>A1CHP1</accession>
<feature type="signal peptide" evidence="2">
    <location>
        <begin position="1"/>
        <end position="17"/>
    </location>
</feature>
<feature type="chain" id="PRO_0000397809" description="Probable dipeptidyl peptidase 4">
    <location>
        <begin position="18"/>
        <end position="768"/>
    </location>
</feature>
<feature type="active site" description="Charge relay system" evidence="1">
    <location>
        <position position="616"/>
    </location>
</feature>
<feature type="active site" description="Charge relay system" evidence="1">
    <location>
        <position position="693"/>
    </location>
</feature>
<feature type="active site" description="Charge relay system" evidence="1">
    <location>
        <position position="728"/>
    </location>
</feature>
<feature type="glycosylation site" description="N-linked (GlcNAc...) asparagine" evidence="2">
    <location>
        <position position="38"/>
    </location>
</feature>
<feature type="glycosylation site" description="N-linked (GlcNAc...) asparagine" evidence="2">
    <location>
        <position position="81"/>
    </location>
</feature>
<feature type="glycosylation site" description="N-linked (GlcNAc...) asparagine" evidence="2">
    <location>
        <position position="104"/>
    </location>
</feature>
<feature type="glycosylation site" description="N-linked (GlcNAc...) asparagine" evidence="2">
    <location>
        <position position="113"/>
    </location>
</feature>
<feature type="glycosylation site" description="N-linked (GlcNAc...) asparagine" evidence="2">
    <location>
        <position position="221"/>
    </location>
</feature>
<feature type="glycosylation site" description="N-linked (GlcNAc...) asparagine" evidence="2">
    <location>
        <position position="282"/>
    </location>
</feature>
<feature type="glycosylation site" description="N-linked (GlcNAc...) asparagine" evidence="2">
    <location>
        <position position="468"/>
    </location>
</feature>
<feature type="glycosylation site" description="N-linked (GlcNAc...) asparagine" evidence="2">
    <location>
        <position position="668"/>
    </location>
</feature>
<evidence type="ECO:0000250" key="1"/>
<evidence type="ECO:0000255" key="2"/>
<evidence type="ECO:0000305" key="3"/>
<reference key="1">
    <citation type="journal article" date="2008" name="PLoS Genet.">
        <title>Genomic islands in the pathogenic filamentous fungus Aspergillus fumigatus.</title>
        <authorList>
            <person name="Fedorova N.D."/>
            <person name="Khaldi N."/>
            <person name="Joardar V.S."/>
            <person name="Maiti R."/>
            <person name="Amedeo P."/>
            <person name="Anderson M.J."/>
            <person name="Crabtree J."/>
            <person name="Silva J.C."/>
            <person name="Badger J.H."/>
            <person name="Albarraq A."/>
            <person name="Angiuoli S."/>
            <person name="Bussey H."/>
            <person name="Bowyer P."/>
            <person name="Cotty P.J."/>
            <person name="Dyer P.S."/>
            <person name="Egan A."/>
            <person name="Galens K."/>
            <person name="Fraser-Liggett C.M."/>
            <person name="Haas B.J."/>
            <person name="Inman J.M."/>
            <person name="Kent R."/>
            <person name="Lemieux S."/>
            <person name="Malavazi I."/>
            <person name="Orvis J."/>
            <person name="Roemer T."/>
            <person name="Ronning C.M."/>
            <person name="Sundaram J.P."/>
            <person name="Sutton G."/>
            <person name="Turner G."/>
            <person name="Venter J.C."/>
            <person name="White O.R."/>
            <person name="Whitty B.R."/>
            <person name="Youngman P."/>
            <person name="Wolfe K.H."/>
            <person name="Goldman G.H."/>
            <person name="Wortman J.R."/>
            <person name="Jiang B."/>
            <person name="Denning D.W."/>
            <person name="Nierman W.C."/>
        </authorList>
    </citation>
    <scope>NUCLEOTIDE SEQUENCE [LARGE SCALE GENOMIC DNA]</scope>
    <source>
        <strain>ATCC 1007 / CBS 513.65 / DSM 816 / NCTC 3887 / NRRL 1 / QM 1276 / 107</strain>
    </source>
</reference>
<keyword id="KW-0031">Aminopeptidase</keyword>
<keyword id="KW-0325">Glycoprotein</keyword>
<keyword id="KW-0378">Hydrolase</keyword>
<keyword id="KW-0645">Protease</keyword>
<keyword id="KW-1185">Reference proteome</keyword>
<keyword id="KW-0964">Secreted</keyword>
<keyword id="KW-0720">Serine protease</keyword>
<keyword id="KW-0732">Signal</keyword>
<proteinExistence type="inferred from homology"/>